<sequence>MTYVIAEPCVDVLDKACIEECPVDCIYEGGRMLYIHPDECVDCGACEPVCPVEAIYYEDDVPDEWAAYTKANVDFFDELGSPGGAAKVGKVDRDVEPVSSLPPQGE</sequence>
<evidence type="ECO:0000250" key="1"/>
<evidence type="ECO:0000255" key="2">
    <source>
        <dbReference type="PROSITE-ProRule" id="PRU00711"/>
    </source>
</evidence>
<evidence type="ECO:0000256" key="3">
    <source>
        <dbReference type="SAM" id="MobiDB-lite"/>
    </source>
</evidence>
<evidence type="ECO:0000269" key="4">
    <source>
    </source>
</evidence>
<organism>
    <name type="scientific">Saccharopolyspora erythraea</name>
    <name type="common">Streptomyces erythraeus</name>
    <dbReference type="NCBI Taxonomy" id="1836"/>
    <lineage>
        <taxon>Bacteria</taxon>
        <taxon>Bacillati</taxon>
        <taxon>Actinomycetota</taxon>
        <taxon>Actinomycetes</taxon>
        <taxon>Pseudonocardiales</taxon>
        <taxon>Pseudonocardiaceae</taxon>
        <taxon>Saccharopolyspora</taxon>
    </lineage>
</organism>
<keyword id="KW-0003">3Fe-4S</keyword>
<keyword id="KW-0004">4Fe-4S</keyword>
<keyword id="KW-0903">Direct protein sequencing</keyword>
<keyword id="KW-0249">Electron transport</keyword>
<keyword id="KW-0408">Iron</keyword>
<keyword id="KW-0411">Iron-sulfur</keyword>
<keyword id="KW-0479">Metal-binding</keyword>
<keyword id="KW-0677">Repeat</keyword>
<keyword id="KW-0813">Transport</keyword>
<reference key="1">
    <citation type="journal article" date="1991" name="Gene">
        <title>Cloning and characterization of the Saccharopolyspora erythraea fdxA gene encoding ferredoxin.</title>
        <authorList>
            <person name="Donadio S."/>
            <person name="Hutchinson C.R."/>
        </authorList>
    </citation>
    <scope>NUCLEOTIDE SEQUENCE [GENOMIC DNA]</scope>
    <source>
        <strain>WHM22</strain>
    </source>
</reference>
<reference key="2">
    <citation type="journal article" date="1988" name="J. Bacteriol.">
        <title>Purification and reconstitution of the electron transport components for 6-deoxyerythronolide B hydroxylase, a cytochrome P-450 enzyme of macrolide antibiotic (erythromycin) biosynthesis.</title>
        <authorList>
            <person name="Shafiee A."/>
            <person name="Hutchinson C.R."/>
        </authorList>
    </citation>
    <scope>PROTEIN SEQUENCE OF 2-16</scope>
    <source>
        <strain>CA340</strain>
    </source>
</reference>
<name>FER_SACER</name>
<feature type="initiator methionine" description="Removed" evidence="4">
    <location>
        <position position="1"/>
    </location>
</feature>
<feature type="chain" id="PRO_0000159103" description="Ferredoxin">
    <location>
        <begin position="2"/>
        <end position="106"/>
    </location>
</feature>
<feature type="domain" description="4Fe-4S ferredoxin-type" evidence="2">
    <location>
        <begin position="31"/>
        <end position="60"/>
    </location>
</feature>
<feature type="region of interest" description="Disordered" evidence="3">
    <location>
        <begin position="84"/>
        <end position="106"/>
    </location>
</feature>
<feature type="binding site" evidence="1">
    <location>
        <position position="9"/>
    </location>
    <ligand>
        <name>[3Fe-4S] cluster</name>
        <dbReference type="ChEBI" id="CHEBI:21137"/>
    </ligand>
</feature>
<feature type="binding site" evidence="1">
    <location>
        <position position="17"/>
    </location>
    <ligand>
        <name>[3Fe-4S] cluster</name>
        <dbReference type="ChEBI" id="CHEBI:21137"/>
    </ligand>
</feature>
<feature type="binding site" evidence="1">
    <location>
        <position position="21"/>
    </location>
    <ligand>
        <name>[4Fe-4S] cluster</name>
        <dbReference type="ChEBI" id="CHEBI:49883"/>
    </ligand>
</feature>
<feature type="binding site" evidence="1">
    <location>
        <position position="40"/>
    </location>
    <ligand>
        <name>[4Fe-4S] cluster</name>
        <dbReference type="ChEBI" id="CHEBI:49883"/>
    </ligand>
</feature>
<feature type="binding site" evidence="1">
    <location>
        <position position="43"/>
    </location>
    <ligand>
        <name>[4Fe-4S] cluster</name>
        <dbReference type="ChEBI" id="CHEBI:49883"/>
    </ligand>
</feature>
<feature type="binding site" evidence="1">
    <location>
        <position position="46"/>
    </location>
    <ligand>
        <name>[4Fe-4S] cluster</name>
        <dbReference type="ChEBI" id="CHEBI:49883"/>
    </ligand>
</feature>
<feature type="binding site" evidence="1">
    <location>
        <position position="50"/>
    </location>
    <ligand>
        <name>[3Fe-4S] cluster</name>
        <dbReference type="ChEBI" id="CHEBI:21137"/>
    </ligand>
</feature>
<comment type="function">
    <text>Ferredoxins are iron-sulfur proteins that transfer electrons in a wide variety of metabolic reactions.</text>
</comment>
<comment type="cofactor">
    <cofactor>
        <name>[4Fe-4S] cluster</name>
        <dbReference type="ChEBI" id="CHEBI:49883"/>
    </cofactor>
    <text>Binds 1 [4Fe-4S] cluster.</text>
</comment>
<comment type="cofactor">
    <cofactor>
        <name>[3Fe-4S] cluster</name>
        <dbReference type="ChEBI" id="CHEBI:21137"/>
    </cofactor>
    <text>Binds 1 [3Fe-4S] cluster.</text>
</comment>
<gene>
    <name type="primary">fdxA</name>
</gene>
<dbReference type="EMBL" id="M61119">
    <property type="protein sequence ID" value="AAA92023.1"/>
    <property type="molecule type" value="Genomic_DNA"/>
</dbReference>
<dbReference type="PIR" id="JH0239">
    <property type="entry name" value="JH0239"/>
</dbReference>
<dbReference type="RefSeq" id="WP_009949328.1">
    <property type="nucleotide sequence ID" value="NZ_JABNNH010000002.1"/>
</dbReference>
<dbReference type="SMR" id="P24496"/>
<dbReference type="OMA" id="DRMLYIH"/>
<dbReference type="GO" id="GO:0051538">
    <property type="term" value="F:3 iron, 4 sulfur cluster binding"/>
    <property type="evidence" value="ECO:0007669"/>
    <property type="project" value="UniProtKB-KW"/>
</dbReference>
<dbReference type="GO" id="GO:0051539">
    <property type="term" value="F:4 iron, 4 sulfur cluster binding"/>
    <property type="evidence" value="ECO:0007669"/>
    <property type="project" value="UniProtKB-KW"/>
</dbReference>
<dbReference type="GO" id="GO:0009055">
    <property type="term" value="F:electron transfer activity"/>
    <property type="evidence" value="ECO:0007669"/>
    <property type="project" value="InterPro"/>
</dbReference>
<dbReference type="GO" id="GO:0046872">
    <property type="term" value="F:metal ion binding"/>
    <property type="evidence" value="ECO:0007669"/>
    <property type="project" value="UniProtKB-KW"/>
</dbReference>
<dbReference type="Gene3D" id="3.30.70.20">
    <property type="match status" value="1"/>
</dbReference>
<dbReference type="InterPro" id="IPR017896">
    <property type="entry name" value="4Fe4S_Fe-S-bd"/>
</dbReference>
<dbReference type="InterPro" id="IPR017900">
    <property type="entry name" value="4Fe4S_Fe_S_CS"/>
</dbReference>
<dbReference type="InterPro" id="IPR000813">
    <property type="entry name" value="7Fe_ferredoxin"/>
</dbReference>
<dbReference type="InterPro" id="IPR054830">
    <property type="entry name" value="FdxA_Actino"/>
</dbReference>
<dbReference type="InterPro" id="IPR050294">
    <property type="entry name" value="RnfB_subfamily"/>
</dbReference>
<dbReference type="NCBIfam" id="NF045480">
    <property type="entry name" value="FdxA_Actino"/>
    <property type="match status" value="1"/>
</dbReference>
<dbReference type="PANTHER" id="PTHR42859:SF2">
    <property type="entry name" value="FERREDOXIN"/>
    <property type="match status" value="1"/>
</dbReference>
<dbReference type="PANTHER" id="PTHR42859">
    <property type="entry name" value="OXIDOREDUCTASE"/>
    <property type="match status" value="1"/>
</dbReference>
<dbReference type="Pfam" id="PF00037">
    <property type="entry name" value="Fer4"/>
    <property type="match status" value="1"/>
</dbReference>
<dbReference type="PRINTS" id="PR00354">
    <property type="entry name" value="7FE8SFRDOXIN"/>
</dbReference>
<dbReference type="SUPFAM" id="SSF54862">
    <property type="entry name" value="4Fe-4S ferredoxins"/>
    <property type="match status" value="1"/>
</dbReference>
<dbReference type="PROSITE" id="PS00198">
    <property type="entry name" value="4FE4S_FER_1"/>
    <property type="match status" value="1"/>
</dbReference>
<dbReference type="PROSITE" id="PS51379">
    <property type="entry name" value="4FE4S_FER_2"/>
    <property type="match status" value="1"/>
</dbReference>
<proteinExistence type="evidence at protein level"/>
<protein>
    <recommendedName>
        <fullName>Ferredoxin</fullName>
    </recommendedName>
</protein>
<accession>P24496</accession>